<organism>
    <name type="scientific">Saimiriine herpesvirus 2 (strain 11)</name>
    <name type="common">SaHV-2</name>
    <name type="synonym">Herpesvirus saimiri</name>
    <dbReference type="NCBI Taxonomy" id="10383"/>
    <lineage>
        <taxon>Viruses</taxon>
        <taxon>Duplodnaviria</taxon>
        <taxon>Heunggongvirae</taxon>
        <taxon>Peploviricota</taxon>
        <taxon>Herviviricetes</taxon>
        <taxon>Herpesvirales</taxon>
        <taxon>Orthoherpesviridae</taxon>
        <taxon>Gammaherpesvirinae</taxon>
        <taxon>Rhadinovirus</taxon>
        <taxon>Rhadinovirus saimiriinegamma2</taxon>
        <taxon>Saimiriine herpesvirus 2</taxon>
    </lineage>
</organism>
<feature type="chain" id="PRO_0000115853" description="DNA replication helicase">
    <location>
        <begin position="1"/>
        <end position="781"/>
    </location>
</feature>
<feature type="binding site" evidence="1">
    <location>
        <begin position="64"/>
        <end position="71"/>
    </location>
    <ligand>
        <name>ATP</name>
        <dbReference type="ChEBI" id="CHEBI:30616"/>
    </ligand>
</feature>
<protein>
    <recommendedName>
        <fullName evidence="1">DNA replication helicase</fullName>
        <ecNumber evidence="1">3.6.4.-</ecNumber>
    </recommendedName>
</protein>
<evidence type="ECO:0000255" key="1">
    <source>
        <dbReference type="HAMAP-Rule" id="MF_04030"/>
    </source>
</evidence>
<comment type="function">
    <text>This protein may be a helicase and is required for replication of viral DNA.</text>
</comment>
<comment type="function">
    <text evidence="1">Component of the helicase/primase complex. Unwinds the DNA at the replication forks and generates single-stranded DNA for both leading and lagging strand synthesis. The primase synthesizes short RNA primers on the lagging strand that the polymerase elongates using dNTPs. Possesses helicase-like motifs and therefore may act as the helicase subunit of the complex.</text>
</comment>
<comment type="subunit">
    <text evidence="1">Associates with the primase and the primase-associated factor to form the helicase-primase complex.</text>
</comment>
<comment type="subcellular location">
    <subcellularLocation>
        <location evidence="1">Host nucleus</location>
    </subcellularLocation>
</comment>
<comment type="similarity">
    <text evidence="1">Belongs to the herpesviridae helicase family.</text>
</comment>
<dbReference type="EC" id="3.6.4.-" evidence="1"/>
<dbReference type="EMBL" id="X64346">
    <property type="protein sequence ID" value="CAA45666.1"/>
    <property type="molecule type" value="Genomic_DNA"/>
</dbReference>
<dbReference type="RefSeq" id="NP_040246.1">
    <property type="nucleotide sequence ID" value="NC_001350.1"/>
</dbReference>
<dbReference type="KEGG" id="vg:1682486"/>
<dbReference type="Proteomes" id="UP000000587">
    <property type="component" value="Segment"/>
</dbReference>
<dbReference type="GO" id="GO:0042025">
    <property type="term" value="C:host cell nucleus"/>
    <property type="evidence" value="ECO:0007669"/>
    <property type="project" value="UniProtKB-SubCell"/>
</dbReference>
<dbReference type="GO" id="GO:0005524">
    <property type="term" value="F:ATP binding"/>
    <property type="evidence" value="ECO:0007669"/>
    <property type="project" value="UniProtKB-KW"/>
</dbReference>
<dbReference type="GO" id="GO:0004386">
    <property type="term" value="F:helicase activity"/>
    <property type="evidence" value="ECO:0007669"/>
    <property type="project" value="UniProtKB-KW"/>
</dbReference>
<dbReference type="GO" id="GO:0016787">
    <property type="term" value="F:hydrolase activity"/>
    <property type="evidence" value="ECO:0007669"/>
    <property type="project" value="UniProtKB-KW"/>
</dbReference>
<dbReference type="GO" id="GO:0006260">
    <property type="term" value="P:DNA replication"/>
    <property type="evidence" value="ECO:0007669"/>
    <property type="project" value="UniProtKB-KW"/>
</dbReference>
<dbReference type="CDD" id="cd18809">
    <property type="entry name" value="SF1_C_RecD"/>
    <property type="match status" value="1"/>
</dbReference>
<dbReference type="Gene3D" id="3.40.50.300">
    <property type="entry name" value="P-loop containing nucleotide triphosphate hydrolases"/>
    <property type="match status" value="2"/>
</dbReference>
<dbReference type="HAMAP" id="MF_04030">
    <property type="entry name" value="HSV_HELI"/>
    <property type="match status" value="1"/>
</dbReference>
<dbReference type="InterPro" id="IPR003840">
    <property type="entry name" value="DNA_helicase_dom"/>
</dbReference>
<dbReference type="InterPro" id="IPR034711">
    <property type="entry name" value="HSV_HELI"/>
</dbReference>
<dbReference type="InterPro" id="IPR027417">
    <property type="entry name" value="P-loop_NTPase"/>
</dbReference>
<dbReference type="Pfam" id="PF02689">
    <property type="entry name" value="Herpes_Helicase"/>
    <property type="match status" value="1"/>
</dbReference>
<dbReference type="SUPFAM" id="SSF52540">
    <property type="entry name" value="P-loop containing nucleoside triphosphate hydrolases"/>
    <property type="match status" value="2"/>
</dbReference>
<organismHost>
    <name type="scientific">Saimiri sciureus</name>
    <name type="common">Common squirrel monkey</name>
    <dbReference type="NCBI Taxonomy" id="9521"/>
</organismHost>
<sequence length="781" mass="88254">MAELSPEFILNMTSDAKVRIIVEKIRKLSNITTRPPEMTLYNDQFDPEQCPGTLLPFTCYVITGTAGAGKSTSISALYQNLNCLITGATTVASQNLSRCLKTYCPTIFNAFGFKSKHINILPRSVPRRTLDTIEQIQNFELCKYWPILTSIIQEFSKKKNLGQYSSISLAAFNMLAKMTTTLWTTNVIVIDEAGTLSSHILTAVVFCYWFYNSWLNTPLYRSGAVPCIVCVGSPTQTDAFNSTYNHIQQKYNIMECDNILSFIIGNKVVSEYISLTNNWALFINNKRCTDPEFGHLLKTLEYSLKISPKTMEYIDRFVVPKAQILNPLEFLGWTRLFLSHAEVKSYLSSLHTALVTGTNVSGAKLFTCPIVCEVFTKAFNEYKSHVNLPSLTATEWLSKNLHRLSNYSQFIDQDMTAIHTETTDTSTKVTYLTKYVKNTYISLNGKTKKCVCGYVGTYKNFKKILESESFIDSHANDQPEFVYSFLCTILYNSLYNFHNYGVTEKNESYLNDLANLKLPENLTHLYTQTDLDIEREALMLEDDVFYHMVSPPPTASSASLPCLISWYTALKDIFISRLKLATTWFSNKFLDREFTSFTINMLVRDNIEFTSTNGRLHGLLEYASTVESYKLQGYTFLPVNFGRSQTTVISKDLQDKMPSIVVQDSSGFIACLEKNVNKMLETLDDGKSFHLCSAGDYGISSKLAMTIVKAQGTSLDKVAICFSNHKKIKVSHIYVAISRATNPNHIVMDCNPLKLLVNDTQSISSQHIIKALNNPNTLLVY</sequence>
<name>HELI_SHV21</name>
<proteinExistence type="inferred from homology"/>
<accession>Q01014</accession>
<reference key="1">
    <citation type="journal article" date="1992" name="J. Virol.">
        <title>Primary structure of the herpesvirus saimiri genome.</title>
        <authorList>
            <person name="Albrecht J.-C."/>
            <person name="Nicholas J."/>
            <person name="Biller D."/>
            <person name="Cameron K.R."/>
            <person name="Biesinger B."/>
            <person name="Newman C."/>
            <person name="Wittmann S."/>
            <person name="Craxton M.A."/>
            <person name="Coleman H."/>
            <person name="Fleckenstein B."/>
            <person name="Honess R.W."/>
        </authorList>
    </citation>
    <scope>NUCLEOTIDE SEQUENCE [LARGE SCALE GENOMIC DNA]</scope>
</reference>
<gene>
    <name evidence="1" type="primary">HELI</name>
    <name type="ordered locus">44</name>
</gene>
<keyword id="KW-0067">ATP-binding</keyword>
<keyword id="KW-0235">DNA replication</keyword>
<keyword id="KW-0347">Helicase</keyword>
<keyword id="KW-1048">Host nucleus</keyword>
<keyword id="KW-0378">Hydrolase</keyword>
<keyword id="KW-0547">Nucleotide-binding</keyword>
<keyword id="KW-1185">Reference proteome</keyword>